<accession>O43583</accession>
<accession>Q9H3U6</accession>
<accession>Q9UKZ0</accession>
<protein>
    <recommendedName>
        <fullName>Density-regulated protein</fullName>
        <shortName>DRP</shortName>
    </recommendedName>
    <alternativeName>
        <fullName>Protein DRP1</fullName>
    </alternativeName>
    <alternativeName>
        <fullName>Smooth muscle cell-associated protein 3</fullName>
        <shortName>SMAP-3</shortName>
    </alternativeName>
</protein>
<dbReference type="EMBL" id="AF038554">
    <property type="protein sequence ID" value="AAC02985.2"/>
    <property type="status" value="ALT_INIT"/>
    <property type="molecule type" value="mRNA"/>
</dbReference>
<dbReference type="EMBL" id="AB014731">
    <property type="protein sequence ID" value="BAB20268.1"/>
    <property type="molecule type" value="mRNA"/>
</dbReference>
<dbReference type="EMBL" id="AC026331">
    <property type="status" value="NOT_ANNOTATED_CDS"/>
    <property type="molecule type" value="Genomic_DNA"/>
</dbReference>
<dbReference type="EMBL" id="AC027290">
    <property type="status" value="NOT_ANNOTATED_CDS"/>
    <property type="molecule type" value="Genomic_DNA"/>
</dbReference>
<dbReference type="EMBL" id="BC007860">
    <property type="protein sequence ID" value="AAH07860.1"/>
    <property type="molecule type" value="mRNA"/>
</dbReference>
<dbReference type="EMBL" id="AF103800">
    <property type="protein sequence ID" value="AAF02420.1"/>
    <property type="molecule type" value="mRNA"/>
</dbReference>
<dbReference type="CCDS" id="CCDS45003.1"/>
<dbReference type="RefSeq" id="NP_003668.2">
    <property type="nucleotide sequence ID" value="NM_003677.4"/>
</dbReference>
<dbReference type="PDB" id="5ONS">
    <property type="method" value="X-ray"/>
    <property type="resolution" value="2.14 A"/>
    <property type="chains" value="B=24-51"/>
</dbReference>
<dbReference type="PDB" id="5VYC">
    <property type="method" value="X-ray"/>
    <property type="resolution" value="6.00 A"/>
    <property type="chains" value="l1/l2/l3/l4/l5/l6=1-198"/>
</dbReference>
<dbReference type="PDB" id="6MS4">
    <property type="method" value="X-ray"/>
    <property type="resolution" value="2.00 A"/>
    <property type="chains" value="B=25-70"/>
</dbReference>
<dbReference type="PDB" id="6VPQ">
    <property type="method" value="X-ray"/>
    <property type="resolution" value="1.74 A"/>
    <property type="chains" value="A/B/C/D/E/F=1-198"/>
</dbReference>
<dbReference type="PDB" id="6VPR">
    <property type="method" value="X-ray"/>
    <property type="resolution" value="2.20 A"/>
    <property type="chains" value="A/B=1-198"/>
</dbReference>
<dbReference type="PDBsum" id="5ONS"/>
<dbReference type="PDBsum" id="5VYC"/>
<dbReference type="PDBsum" id="6MS4"/>
<dbReference type="PDBsum" id="6VPQ"/>
<dbReference type="PDBsum" id="6VPR"/>
<dbReference type="SMR" id="O43583"/>
<dbReference type="BioGRID" id="114131">
    <property type="interactions" value="79"/>
</dbReference>
<dbReference type="FunCoup" id="O43583">
    <property type="interactions" value="777"/>
</dbReference>
<dbReference type="IntAct" id="O43583">
    <property type="interactions" value="44"/>
</dbReference>
<dbReference type="MINT" id="O43583"/>
<dbReference type="STRING" id="9606.ENSP00000280557"/>
<dbReference type="GlyGen" id="O43583">
    <property type="glycosylation" value="1 site, 1 O-linked glycan (1 site)"/>
</dbReference>
<dbReference type="iPTMnet" id="O43583"/>
<dbReference type="PhosphoSitePlus" id="O43583"/>
<dbReference type="SwissPalm" id="O43583"/>
<dbReference type="BioMuta" id="DENR"/>
<dbReference type="jPOST" id="O43583"/>
<dbReference type="MassIVE" id="O43583"/>
<dbReference type="PaxDb" id="9606-ENSP00000280557"/>
<dbReference type="PeptideAtlas" id="O43583"/>
<dbReference type="ProteomicsDB" id="49063"/>
<dbReference type="Pumba" id="O43583"/>
<dbReference type="TopDownProteomics" id="O43583"/>
<dbReference type="Antibodypedia" id="31699">
    <property type="antibodies" value="198 antibodies from 30 providers"/>
</dbReference>
<dbReference type="DNASU" id="8562"/>
<dbReference type="Ensembl" id="ENST00000280557.11">
    <property type="protein sequence ID" value="ENSP00000280557.6"/>
    <property type="gene ID" value="ENSG00000139726.11"/>
</dbReference>
<dbReference type="GeneID" id="8562"/>
<dbReference type="KEGG" id="hsa:8562"/>
<dbReference type="MANE-Select" id="ENST00000280557.11">
    <property type="protein sequence ID" value="ENSP00000280557.6"/>
    <property type="RefSeq nucleotide sequence ID" value="NM_003677.5"/>
    <property type="RefSeq protein sequence ID" value="NP_003668.2"/>
</dbReference>
<dbReference type="UCSC" id="uc001uda.4">
    <property type="organism name" value="human"/>
</dbReference>
<dbReference type="AGR" id="HGNC:2769"/>
<dbReference type="CTD" id="8562"/>
<dbReference type="DisGeNET" id="8562"/>
<dbReference type="GeneCards" id="DENR"/>
<dbReference type="HGNC" id="HGNC:2769">
    <property type="gene designation" value="DENR"/>
</dbReference>
<dbReference type="HPA" id="ENSG00000139726">
    <property type="expression patterns" value="Low tissue specificity"/>
</dbReference>
<dbReference type="MalaCards" id="DENR"/>
<dbReference type="MIM" id="604550">
    <property type="type" value="gene"/>
</dbReference>
<dbReference type="neXtProt" id="NX_O43583"/>
<dbReference type="OpenTargets" id="ENSG00000139726"/>
<dbReference type="PharmGKB" id="PA27252"/>
<dbReference type="VEuPathDB" id="HostDB:ENSG00000139726"/>
<dbReference type="eggNOG" id="KOG3239">
    <property type="taxonomic scope" value="Eukaryota"/>
</dbReference>
<dbReference type="GeneTree" id="ENSGT00390000014349"/>
<dbReference type="HOGENOM" id="CLU_073511_1_0_1"/>
<dbReference type="InParanoid" id="O43583"/>
<dbReference type="OMA" id="EVFEIDM"/>
<dbReference type="OrthoDB" id="277199at2759"/>
<dbReference type="PAN-GO" id="O43583">
    <property type="GO annotations" value="3 GO annotations based on evolutionary models"/>
</dbReference>
<dbReference type="PhylomeDB" id="O43583"/>
<dbReference type="TreeFam" id="TF105912"/>
<dbReference type="PathwayCommons" id="O43583"/>
<dbReference type="SignaLink" id="O43583"/>
<dbReference type="SIGNOR" id="O43583"/>
<dbReference type="BioGRID-ORCS" id="8562">
    <property type="hits" value="640 hits in 1138 CRISPR screens"/>
</dbReference>
<dbReference type="CD-CODE" id="91857CE7">
    <property type="entry name" value="Nucleolus"/>
</dbReference>
<dbReference type="CD-CODE" id="DEE660B4">
    <property type="entry name" value="Stress granule"/>
</dbReference>
<dbReference type="ChiTaRS" id="DENR">
    <property type="organism name" value="human"/>
</dbReference>
<dbReference type="GenomeRNAi" id="8562"/>
<dbReference type="Pharos" id="O43583">
    <property type="development level" value="Tbio"/>
</dbReference>
<dbReference type="PRO" id="PR:O43583"/>
<dbReference type="Proteomes" id="UP000005640">
    <property type="component" value="Chromosome 12"/>
</dbReference>
<dbReference type="RNAct" id="O43583">
    <property type="molecule type" value="protein"/>
</dbReference>
<dbReference type="Bgee" id="ENSG00000139726">
    <property type="expression patterns" value="Expressed in germinal epithelium of ovary and 207 other cell types or tissues"/>
</dbReference>
<dbReference type="ExpressionAtlas" id="O43583">
    <property type="expression patterns" value="baseline and differential"/>
</dbReference>
<dbReference type="GO" id="GO:0005737">
    <property type="term" value="C:cytoplasm"/>
    <property type="evidence" value="ECO:0000314"/>
    <property type="project" value="UniProtKB"/>
</dbReference>
<dbReference type="GO" id="GO:0003743">
    <property type="term" value="F:translation initiation factor activity"/>
    <property type="evidence" value="ECO:0007669"/>
    <property type="project" value="UniProtKB-KW"/>
</dbReference>
<dbReference type="GO" id="GO:0001731">
    <property type="term" value="P:formation of translation preinitiation complex"/>
    <property type="evidence" value="ECO:0000314"/>
    <property type="project" value="UniProtKB"/>
</dbReference>
<dbReference type="GO" id="GO:0075522">
    <property type="term" value="P:IRES-dependent viral translational initiation"/>
    <property type="evidence" value="ECO:0000314"/>
    <property type="project" value="UniProtKB"/>
</dbReference>
<dbReference type="GO" id="GO:0032790">
    <property type="term" value="P:ribosome disassembly"/>
    <property type="evidence" value="ECO:0000314"/>
    <property type="project" value="UniProtKB"/>
</dbReference>
<dbReference type="GO" id="GO:0002188">
    <property type="term" value="P:translation reinitiation"/>
    <property type="evidence" value="ECO:0000318"/>
    <property type="project" value="GO_Central"/>
</dbReference>
<dbReference type="CDD" id="cd11607">
    <property type="entry name" value="DENR_C"/>
    <property type="match status" value="1"/>
</dbReference>
<dbReference type="FunFam" id="3.30.780.10:FF:000004">
    <property type="entry name" value="density-regulated protein-like"/>
    <property type="match status" value="1"/>
</dbReference>
<dbReference type="Gene3D" id="3.30.780.10">
    <property type="entry name" value="SUI1-like domain"/>
    <property type="match status" value="1"/>
</dbReference>
<dbReference type="InterPro" id="IPR050318">
    <property type="entry name" value="DENR/SUI1_TIF"/>
</dbReference>
<dbReference type="InterPro" id="IPR046447">
    <property type="entry name" value="DENR_C"/>
</dbReference>
<dbReference type="InterPro" id="IPR005873">
    <property type="entry name" value="DENR_eukaryotes"/>
</dbReference>
<dbReference type="InterPro" id="IPR048517">
    <property type="entry name" value="DENR_N"/>
</dbReference>
<dbReference type="InterPro" id="IPR001950">
    <property type="entry name" value="SUI1"/>
</dbReference>
<dbReference type="InterPro" id="IPR036877">
    <property type="entry name" value="SUI1_dom_sf"/>
</dbReference>
<dbReference type="NCBIfam" id="TIGR01159">
    <property type="entry name" value="DRP1"/>
    <property type="match status" value="1"/>
</dbReference>
<dbReference type="PANTHER" id="PTHR12789:SF0">
    <property type="entry name" value="DENSITY-REGULATED PROTEIN"/>
    <property type="match status" value="1"/>
</dbReference>
<dbReference type="PANTHER" id="PTHR12789">
    <property type="entry name" value="DENSITY-REGULATED PROTEIN HOMOLOG"/>
    <property type="match status" value="1"/>
</dbReference>
<dbReference type="Pfam" id="PF21023">
    <property type="entry name" value="DENR_N"/>
    <property type="match status" value="1"/>
</dbReference>
<dbReference type="Pfam" id="PF01253">
    <property type="entry name" value="SUI1"/>
    <property type="match status" value="1"/>
</dbReference>
<dbReference type="SUPFAM" id="SSF55159">
    <property type="entry name" value="eIF1-like"/>
    <property type="match status" value="1"/>
</dbReference>
<dbReference type="PROSITE" id="PS50296">
    <property type="entry name" value="SUI1"/>
    <property type="match status" value="1"/>
</dbReference>
<sequence length="198" mass="22092">MAADISESSGADCKGDPRNSAKLDADYPLRVLYCGVCSLPTEYCEYMPDVAKCRQWLEKNFPNEFAKLTVENSPKQEAGISEGQGTAGEEEEKKKQKRGGRGQIKQKKKTVPQKVTIAKIPRAKKKYVTRVCGLATFEIDLKEAQRFFAQKFSCGASVTGEDEIIIQGDFTDDIIDVIQEKWPEVDDDSIEDLGEVKK</sequence>
<gene>
    <name type="primary">DENR</name>
    <name type="synonym">DRP1</name>
    <name type="ORF">H14</name>
</gene>
<organism>
    <name type="scientific">Homo sapiens</name>
    <name type="common">Human</name>
    <dbReference type="NCBI Taxonomy" id="9606"/>
    <lineage>
        <taxon>Eukaryota</taxon>
        <taxon>Metazoa</taxon>
        <taxon>Chordata</taxon>
        <taxon>Craniata</taxon>
        <taxon>Vertebrata</taxon>
        <taxon>Euteleostomi</taxon>
        <taxon>Mammalia</taxon>
        <taxon>Eutheria</taxon>
        <taxon>Euarchontoglires</taxon>
        <taxon>Primates</taxon>
        <taxon>Haplorrhini</taxon>
        <taxon>Catarrhini</taxon>
        <taxon>Hominidae</taxon>
        <taxon>Homo</taxon>
    </lineage>
</organism>
<comment type="function">
    <text evidence="5 7 8">Translation regulator forming a complex with MCTS1 to promote translation reinitiation. Translation reinitiation is the process where the small ribosomal subunit remains attached to the mRNA following termination of translation of a regulatory upstream ORF (uORF), and resume scanning on the same mRNA molecule to initiate translation of a downstream ORF, usually the main ORF (mORF). The MCTS1/DENR complex is pivotal to two linked mechanisms essential for translation reinitiation. Firstly, the dissociation of deacylated tRNAs from post-termination 40S ribosomal complexes during ribosome recycling. Secondly, the recruitment in an EIF2-independent manner of aminoacylated initiator tRNA to P site of 40S ribosomes for a new round of translation. This regulatory mechanism governs the translation of more than 150 genes which translation reinitiation is MCTS1/DENR complex-dependent.</text>
</comment>
<comment type="subunit">
    <text evidence="5 8">Interacts with MCTS1 (via PUA domain); the complex regulates translation reinitiation.</text>
</comment>
<comment type="interaction">
    <interactant intactId="EBI-716083">
        <id>O43583</id>
    </interactant>
    <interactant intactId="EBI-366182">
        <id>P10636</id>
        <label>MAPT</label>
    </interactant>
    <organismsDiffer>false</organismsDiffer>
    <experiments>2</experiments>
</comment>
<comment type="interaction">
    <interactant intactId="EBI-716083">
        <id>O43583</id>
    </interactant>
    <interactant intactId="EBI-2341610">
        <id>Q9NX47</id>
        <label>MARCHF5</label>
    </interactant>
    <organismsDiffer>false</organismsDiffer>
    <experiments>2</experiments>
</comment>
<comment type="interaction">
    <interactant intactId="EBI-716083">
        <id>O43583</id>
    </interactant>
    <interactant intactId="EBI-716076">
        <id>Q9ULC4</id>
        <label>MCTS1</label>
    </interactant>
    <organismsDiffer>false</organismsDiffer>
    <experiments>10</experiments>
</comment>
<comment type="interaction">
    <interactant intactId="EBI-716083">
        <id>O43583</id>
    </interactant>
    <interactant intactId="EBI-347721">
        <id>Q8WX92</id>
        <label>NELFB</label>
    </interactant>
    <organismsDiffer>false</organismsDiffer>
    <experiments>2</experiments>
</comment>
<comment type="interaction">
    <interactant intactId="EBI-716083">
        <id>O43583</id>
    </interactant>
    <interactant intactId="EBI-3390054">
        <id>P0CG48</id>
        <label>UBC</label>
    </interactant>
    <organismsDiffer>false</organismsDiffer>
    <experiments>3</experiments>
</comment>
<comment type="subcellular location">
    <subcellularLocation>
        <location evidence="5">Cytoplasm</location>
    </subcellularLocation>
</comment>
<comment type="tissue specificity">
    <text evidence="9">Highly expressed in heart and skeletal muscle and moderately expressed in the brain, placenta, liver and pancreas. Weakly expressed in the lung and kidney.</text>
</comment>
<comment type="induction">
    <text evidence="4 6 9">Up-regulated with increasing cell-density by HNRNPD. Up-regulated in ovarian and breast cancer cells by ERBB2 overexpression. Not induced by TGFB1.</text>
</comment>
<comment type="similarity">
    <text evidence="10">Belongs to the DENR family.</text>
</comment>
<comment type="sequence caution" evidence="10">
    <conflict type="erroneous initiation">
        <sequence resource="EMBL-CDS" id="AAC02985"/>
    </conflict>
    <text>Extended N-terminus.</text>
</comment>
<comment type="online information" name="Atlas of Genetics and Cytogenetics in Oncology and Haematology">
    <link uri="https://atlasgeneticsoncology.org/gene/40295/DENR"/>
</comment>
<evidence type="ECO:0000250" key="1">
    <source>
        <dbReference type="UniProtKB" id="Q9CQJ6"/>
    </source>
</evidence>
<evidence type="ECO:0000255" key="2">
    <source>
        <dbReference type="PROSITE-ProRule" id="PRU00200"/>
    </source>
</evidence>
<evidence type="ECO:0000256" key="3">
    <source>
        <dbReference type="SAM" id="MobiDB-lite"/>
    </source>
</evidence>
<evidence type="ECO:0000269" key="4">
    <source>
    </source>
</evidence>
<evidence type="ECO:0000269" key="5">
    <source>
    </source>
</evidence>
<evidence type="ECO:0000269" key="6">
    <source>
    </source>
</evidence>
<evidence type="ECO:0000269" key="7">
    <source>
    </source>
</evidence>
<evidence type="ECO:0000269" key="8">
    <source>
    </source>
</evidence>
<evidence type="ECO:0000269" key="9">
    <source>
    </source>
</evidence>
<evidence type="ECO:0000305" key="10"/>
<evidence type="ECO:0007744" key="11">
    <source>
    </source>
</evidence>
<evidence type="ECO:0007744" key="12">
    <source>
    </source>
</evidence>
<evidence type="ECO:0007744" key="13">
    <source>
    </source>
</evidence>
<evidence type="ECO:0007744" key="14">
    <source>
    </source>
</evidence>
<evidence type="ECO:0007744" key="15">
    <source>
    </source>
</evidence>
<evidence type="ECO:0007744" key="16">
    <source>
    </source>
</evidence>
<evidence type="ECO:0007744" key="17">
    <source>
    </source>
</evidence>
<evidence type="ECO:0007744" key="18">
    <source>
    </source>
</evidence>
<evidence type="ECO:0007744" key="19">
    <source>
    </source>
</evidence>
<evidence type="ECO:0007829" key="20">
    <source>
        <dbReference type="PDB" id="5ONS"/>
    </source>
</evidence>
<evidence type="ECO:0007829" key="21">
    <source>
        <dbReference type="PDB" id="6MS4"/>
    </source>
</evidence>
<evidence type="ECO:0007829" key="22">
    <source>
        <dbReference type="PDB" id="6VPQ"/>
    </source>
</evidence>
<reference key="1">
    <citation type="journal article" date="1998" name="DNA Cell Biol.">
        <title>Drp, a novel protein expressed at high cell density but not during growth arrest.</title>
        <authorList>
            <person name="Deyo J.E."/>
            <person name="Chiao P.J."/>
            <person name="Tainsky M.A."/>
        </authorList>
    </citation>
    <scope>NUCLEOTIDE SEQUENCE [MRNA]</scope>
    <scope>TISSUE SPECIFICITY</scope>
    <scope>INDUCTION</scope>
</reference>
<reference key="2">
    <citation type="submission" date="1998-05" db="EMBL/GenBank/DDBJ databases">
        <title>Molecular cloning and characterization of human smooth muscle cell associated protein-3 (SMAP-3).</title>
        <authorList>
            <person name="Nishimoto S."/>
            <person name="Toyoda H."/>
            <person name="Tawara J."/>
            <person name="Aoki T."/>
            <person name="Komurasaki T."/>
        </authorList>
    </citation>
    <scope>NUCLEOTIDE SEQUENCE [MRNA]</scope>
    <source>
        <tissue>Heart</tissue>
    </source>
</reference>
<reference key="3">
    <citation type="journal article" date="2006" name="Nature">
        <title>The finished DNA sequence of human chromosome 12.</title>
        <authorList>
            <person name="Scherer S.E."/>
            <person name="Muzny D.M."/>
            <person name="Buhay C.J."/>
            <person name="Chen R."/>
            <person name="Cree A."/>
            <person name="Ding Y."/>
            <person name="Dugan-Rocha S."/>
            <person name="Gill R."/>
            <person name="Gunaratne P."/>
            <person name="Harris R.A."/>
            <person name="Hawes A.C."/>
            <person name="Hernandez J."/>
            <person name="Hodgson A.V."/>
            <person name="Hume J."/>
            <person name="Jackson A."/>
            <person name="Khan Z.M."/>
            <person name="Kovar-Smith C."/>
            <person name="Lewis L.R."/>
            <person name="Lozado R.J."/>
            <person name="Metzker M.L."/>
            <person name="Milosavljevic A."/>
            <person name="Miner G.R."/>
            <person name="Montgomery K.T."/>
            <person name="Morgan M.B."/>
            <person name="Nazareth L.V."/>
            <person name="Scott G."/>
            <person name="Sodergren E."/>
            <person name="Song X.-Z."/>
            <person name="Steffen D."/>
            <person name="Lovering R.C."/>
            <person name="Wheeler D.A."/>
            <person name="Worley K.C."/>
            <person name="Yuan Y."/>
            <person name="Zhang Z."/>
            <person name="Adams C.Q."/>
            <person name="Ansari-Lari M.A."/>
            <person name="Ayele M."/>
            <person name="Brown M.J."/>
            <person name="Chen G."/>
            <person name="Chen Z."/>
            <person name="Clerc-Blankenburg K.P."/>
            <person name="Davis C."/>
            <person name="Delgado O."/>
            <person name="Dinh H.H."/>
            <person name="Draper H."/>
            <person name="Gonzalez-Garay M.L."/>
            <person name="Havlak P."/>
            <person name="Jackson L.R."/>
            <person name="Jacob L.S."/>
            <person name="Kelly S.H."/>
            <person name="Li L."/>
            <person name="Li Z."/>
            <person name="Liu J."/>
            <person name="Liu W."/>
            <person name="Lu J."/>
            <person name="Maheshwari M."/>
            <person name="Nguyen B.-V."/>
            <person name="Okwuonu G.O."/>
            <person name="Pasternak S."/>
            <person name="Perez L.M."/>
            <person name="Plopper F.J.H."/>
            <person name="Santibanez J."/>
            <person name="Shen H."/>
            <person name="Tabor P.E."/>
            <person name="Verduzco D."/>
            <person name="Waldron L."/>
            <person name="Wang Q."/>
            <person name="Williams G.A."/>
            <person name="Zhang J."/>
            <person name="Zhou J."/>
            <person name="Allen C.C."/>
            <person name="Amin A.G."/>
            <person name="Anyalebechi V."/>
            <person name="Bailey M."/>
            <person name="Barbaria J.A."/>
            <person name="Bimage K.E."/>
            <person name="Bryant N.P."/>
            <person name="Burch P.E."/>
            <person name="Burkett C.E."/>
            <person name="Burrell K.L."/>
            <person name="Calderon E."/>
            <person name="Cardenas V."/>
            <person name="Carter K."/>
            <person name="Casias K."/>
            <person name="Cavazos I."/>
            <person name="Cavazos S.R."/>
            <person name="Ceasar H."/>
            <person name="Chacko J."/>
            <person name="Chan S.N."/>
            <person name="Chavez D."/>
            <person name="Christopoulos C."/>
            <person name="Chu J."/>
            <person name="Cockrell R."/>
            <person name="Cox C.D."/>
            <person name="Dang M."/>
            <person name="Dathorne S.R."/>
            <person name="David R."/>
            <person name="Davis C.M."/>
            <person name="Davy-Carroll L."/>
            <person name="Deshazo D.R."/>
            <person name="Donlin J.E."/>
            <person name="D'Souza L."/>
            <person name="Eaves K.A."/>
            <person name="Egan A."/>
            <person name="Emery-Cohen A.J."/>
            <person name="Escotto M."/>
            <person name="Flagg N."/>
            <person name="Forbes L.D."/>
            <person name="Gabisi A.M."/>
            <person name="Garza M."/>
            <person name="Hamilton C."/>
            <person name="Henderson N."/>
            <person name="Hernandez O."/>
            <person name="Hines S."/>
            <person name="Hogues M.E."/>
            <person name="Huang M."/>
            <person name="Idlebird D.G."/>
            <person name="Johnson R."/>
            <person name="Jolivet A."/>
            <person name="Jones S."/>
            <person name="Kagan R."/>
            <person name="King L.M."/>
            <person name="Leal B."/>
            <person name="Lebow H."/>
            <person name="Lee S."/>
            <person name="LeVan J.M."/>
            <person name="Lewis L.C."/>
            <person name="London P."/>
            <person name="Lorensuhewa L.M."/>
            <person name="Loulseged H."/>
            <person name="Lovett D.A."/>
            <person name="Lucier A."/>
            <person name="Lucier R.L."/>
            <person name="Ma J."/>
            <person name="Madu R.C."/>
            <person name="Mapua P."/>
            <person name="Martindale A.D."/>
            <person name="Martinez E."/>
            <person name="Massey E."/>
            <person name="Mawhiney S."/>
            <person name="Meador M.G."/>
            <person name="Mendez S."/>
            <person name="Mercado C."/>
            <person name="Mercado I.C."/>
            <person name="Merritt C.E."/>
            <person name="Miner Z.L."/>
            <person name="Minja E."/>
            <person name="Mitchell T."/>
            <person name="Mohabbat F."/>
            <person name="Mohabbat K."/>
            <person name="Montgomery B."/>
            <person name="Moore N."/>
            <person name="Morris S."/>
            <person name="Munidasa M."/>
            <person name="Ngo R.N."/>
            <person name="Nguyen N.B."/>
            <person name="Nickerson E."/>
            <person name="Nwaokelemeh O.O."/>
            <person name="Nwokenkwo S."/>
            <person name="Obregon M."/>
            <person name="Oguh M."/>
            <person name="Oragunye N."/>
            <person name="Oviedo R.J."/>
            <person name="Parish B.J."/>
            <person name="Parker D.N."/>
            <person name="Parrish J."/>
            <person name="Parks K.L."/>
            <person name="Paul H.A."/>
            <person name="Payton B.A."/>
            <person name="Perez A."/>
            <person name="Perrin W."/>
            <person name="Pickens A."/>
            <person name="Primus E.L."/>
            <person name="Pu L.-L."/>
            <person name="Puazo M."/>
            <person name="Quiles M.M."/>
            <person name="Quiroz J.B."/>
            <person name="Rabata D."/>
            <person name="Reeves K."/>
            <person name="Ruiz S.J."/>
            <person name="Shao H."/>
            <person name="Sisson I."/>
            <person name="Sonaike T."/>
            <person name="Sorelle R.P."/>
            <person name="Sutton A.E."/>
            <person name="Svatek A.F."/>
            <person name="Svetz L.A."/>
            <person name="Tamerisa K.S."/>
            <person name="Taylor T.R."/>
            <person name="Teague B."/>
            <person name="Thomas N."/>
            <person name="Thorn R.D."/>
            <person name="Trejos Z.Y."/>
            <person name="Trevino B.K."/>
            <person name="Ukegbu O.N."/>
            <person name="Urban J.B."/>
            <person name="Vasquez L.I."/>
            <person name="Vera V.A."/>
            <person name="Villasana D.M."/>
            <person name="Wang L."/>
            <person name="Ward-Moore S."/>
            <person name="Warren J.T."/>
            <person name="Wei X."/>
            <person name="White F."/>
            <person name="Williamson A.L."/>
            <person name="Wleczyk R."/>
            <person name="Wooden H.S."/>
            <person name="Wooden S.H."/>
            <person name="Yen J."/>
            <person name="Yoon L."/>
            <person name="Yoon V."/>
            <person name="Zorrilla S.E."/>
            <person name="Nelson D."/>
            <person name="Kucherlapati R."/>
            <person name="Weinstock G."/>
            <person name="Gibbs R.A."/>
        </authorList>
    </citation>
    <scope>NUCLEOTIDE SEQUENCE [LARGE SCALE GENOMIC DNA]</scope>
</reference>
<reference key="4">
    <citation type="journal article" date="2004" name="Genome Res.">
        <title>The status, quality, and expansion of the NIH full-length cDNA project: the Mammalian Gene Collection (MGC).</title>
        <authorList>
            <consortium name="The MGC Project Team"/>
        </authorList>
    </citation>
    <scope>NUCLEOTIDE SEQUENCE [LARGE SCALE MRNA]</scope>
    <source>
        <tissue>Uterus</tissue>
    </source>
</reference>
<reference key="5">
    <citation type="journal article" date="1999" name="Nucleic Acids Res.">
        <title>Identification of differentially expressed genes associated with HER-2/neu overexpression in human breast cancer cells.</title>
        <authorList>
            <person name="Oh J.J."/>
            <person name="Grosshans D.R."/>
            <person name="Wong S.G."/>
            <person name="Slamon D.J."/>
        </authorList>
    </citation>
    <scope>NUCLEOTIDE SEQUENCE [MRNA] OF 49-198</scope>
    <scope>INDUCTION BY ERBB2</scope>
</reference>
<reference key="6">
    <citation type="journal article" date="2006" name="Cancer Res.">
        <title>MCT-1 protein interacts with the cap complex and modulates messenger RNA translational profiles.</title>
        <authorList>
            <person name="Reinert L.S."/>
            <person name="Shi B."/>
            <person name="Nandi S."/>
            <person name="Mazan-Mamczarz K."/>
            <person name="Vitolo M."/>
            <person name="Bachman K.E."/>
            <person name="He H."/>
            <person name="Gartenhaus R.B."/>
        </authorList>
    </citation>
    <scope>FUNCTION</scope>
    <scope>INTERACTION WITH MCTS1</scope>
    <scope>SUBCELLULAR LOCATION</scope>
</reference>
<reference key="7">
    <citation type="journal article" date="2006" name="Cell">
        <title>Global, in vivo, and site-specific phosphorylation dynamics in signaling networks.</title>
        <authorList>
            <person name="Olsen J.V."/>
            <person name="Blagoev B."/>
            <person name="Gnad F."/>
            <person name="Macek B."/>
            <person name="Kumar C."/>
            <person name="Mortensen P."/>
            <person name="Mann M."/>
        </authorList>
    </citation>
    <scope>IDENTIFICATION BY MASS SPECTROMETRY [LARGE SCALE ANALYSIS]</scope>
    <source>
        <tissue>Cervix carcinoma</tissue>
    </source>
</reference>
<reference key="8">
    <citation type="journal article" date="2007" name="Cancer Genomics Proteomics">
        <title>Post-transcriptional control of the MCT-1-associated protein DENR/DRP by RNA-binding protein AUF1.</title>
        <authorList>
            <person name="Mazan-Mamczarz K."/>
            <person name="Gartenhaus R.B."/>
        </authorList>
    </citation>
    <scope>INDUCTION BY HNRNPD</scope>
</reference>
<reference key="9">
    <citation type="journal article" date="2008" name="Proc. Natl. Acad. Sci. U.S.A.">
        <title>A quantitative atlas of mitotic phosphorylation.</title>
        <authorList>
            <person name="Dephoure N."/>
            <person name="Zhou C."/>
            <person name="Villen J."/>
            <person name="Beausoleil S.A."/>
            <person name="Bakalarski C.E."/>
            <person name="Elledge S.J."/>
            <person name="Gygi S.P."/>
        </authorList>
    </citation>
    <scope>PHOSPHORYLATION [LARGE SCALE ANALYSIS] AT SER-73</scope>
    <scope>IDENTIFICATION BY MASS SPECTROMETRY [LARGE SCALE ANALYSIS]</scope>
    <source>
        <tissue>Cervix carcinoma</tissue>
    </source>
</reference>
<reference key="10">
    <citation type="journal article" date="2009" name="Anal. Chem.">
        <title>Lys-N and trypsin cover complementary parts of the phosphoproteome in a refined SCX-based approach.</title>
        <authorList>
            <person name="Gauci S."/>
            <person name="Helbig A.O."/>
            <person name="Slijper M."/>
            <person name="Krijgsveld J."/>
            <person name="Heck A.J."/>
            <person name="Mohammed S."/>
        </authorList>
    </citation>
    <scope>ACETYLATION [LARGE SCALE ANALYSIS] AT ALA-2</scope>
    <scope>CLEAVAGE OF INITIATOR METHIONINE [LARGE SCALE ANALYSIS]</scope>
    <scope>IDENTIFICATION BY MASS SPECTROMETRY [LARGE SCALE ANALYSIS]</scope>
</reference>
<reference key="11">
    <citation type="journal article" date="2009" name="Sci. Signal.">
        <title>Quantitative phosphoproteomic analysis of T cell receptor signaling reveals system-wide modulation of protein-protein interactions.</title>
        <authorList>
            <person name="Mayya V."/>
            <person name="Lundgren D.H."/>
            <person name="Hwang S.-I."/>
            <person name="Rezaul K."/>
            <person name="Wu L."/>
            <person name="Eng J.K."/>
            <person name="Rodionov V."/>
            <person name="Han D.K."/>
        </authorList>
    </citation>
    <scope>PHOSPHORYLATION [LARGE SCALE ANALYSIS] AT SER-73</scope>
    <scope>IDENTIFICATION BY MASS SPECTROMETRY [LARGE SCALE ANALYSIS]</scope>
    <source>
        <tissue>Leukemic T-cell</tissue>
    </source>
</reference>
<reference key="12">
    <citation type="journal article" date="2010" name="Genes Dev.">
        <title>Activities of ligatin and MCT-1/DENR in eukaryotic translation initiation and ribosomal recycling.</title>
        <authorList>
            <person name="Skabkin M.A."/>
            <person name="Skabkina O.V."/>
            <person name="Dhote V."/>
            <person name="Komar A.A."/>
            <person name="Hellen C.U."/>
            <person name="Pestova T.V."/>
        </authorList>
    </citation>
    <scope>FUNCTION</scope>
</reference>
<reference key="13">
    <citation type="journal article" date="2010" name="Sci. Signal.">
        <title>Quantitative phosphoproteomics reveals widespread full phosphorylation site occupancy during mitosis.</title>
        <authorList>
            <person name="Olsen J.V."/>
            <person name="Vermeulen M."/>
            <person name="Santamaria A."/>
            <person name="Kumar C."/>
            <person name="Miller M.L."/>
            <person name="Jensen L.J."/>
            <person name="Gnad F."/>
            <person name="Cox J."/>
            <person name="Jensen T.S."/>
            <person name="Nigg E.A."/>
            <person name="Brunak S."/>
            <person name="Mann M."/>
        </authorList>
    </citation>
    <scope>PHOSPHORYLATION [LARGE SCALE ANALYSIS] AT SER-73</scope>
    <scope>IDENTIFICATION BY MASS SPECTROMETRY [LARGE SCALE ANALYSIS]</scope>
    <source>
        <tissue>Cervix carcinoma</tissue>
    </source>
</reference>
<reference key="14">
    <citation type="journal article" date="2011" name="BMC Syst. Biol.">
        <title>Initial characterization of the human central proteome.</title>
        <authorList>
            <person name="Burkard T.R."/>
            <person name="Planyavsky M."/>
            <person name="Kaupe I."/>
            <person name="Breitwieser F.P."/>
            <person name="Buerckstuemmer T."/>
            <person name="Bennett K.L."/>
            <person name="Superti-Furga G."/>
            <person name="Colinge J."/>
        </authorList>
    </citation>
    <scope>IDENTIFICATION BY MASS SPECTROMETRY [LARGE SCALE ANALYSIS]</scope>
</reference>
<reference key="15">
    <citation type="journal article" date="2011" name="Sci. Signal.">
        <title>System-wide temporal characterization of the proteome and phosphoproteome of human embryonic stem cell differentiation.</title>
        <authorList>
            <person name="Rigbolt K.T."/>
            <person name="Prokhorova T.A."/>
            <person name="Akimov V."/>
            <person name="Henningsen J."/>
            <person name="Johansen P.T."/>
            <person name="Kratchmarova I."/>
            <person name="Kassem M."/>
            <person name="Mann M."/>
            <person name="Olsen J.V."/>
            <person name="Blagoev B."/>
        </authorList>
    </citation>
    <scope>PHOSPHORYLATION [LARGE SCALE ANALYSIS] AT SER-73</scope>
    <scope>IDENTIFICATION BY MASS SPECTROMETRY [LARGE SCALE ANALYSIS]</scope>
</reference>
<reference key="16">
    <citation type="journal article" date="2012" name="Mol. Cell. Proteomics">
        <title>Comparative large-scale characterisation of plant vs. mammal proteins reveals similar and idiosyncratic N-alpha acetylation features.</title>
        <authorList>
            <person name="Bienvenut W.V."/>
            <person name="Sumpton D."/>
            <person name="Martinez A."/>
            <person name="Lilla S."/>
            <person name="Espagne C."/>
            <person name="Meinnel T."/>
            <person name="Giglione C."/>
        </authorList>
    </citation>
    <scope>ACETYLATION [LARGE SCALE ANALYSIS] AT ALA-2</scope>
    <scope>CLEAVAGE OF INITIATOR METHIONINE [LARGE SCALE ANALYSIS]</scope>
    <scope>IDENTIFICATION BY MASS SPECTROMETRY [LARGE SCALE ANALYSIS]</scope>
</reference>
<reference key="17">
    <citation type="journal article" date="2012" name="Proc. Natl. Acad. Sci. U.S.A.">
        <title>N-terminal acetylome analyses and functional insights of the N-terminal acetyltransferase NatB.</title>
        <authorList>
            <person name="Van Damme P."/>
            <person name="Lasa M."/>
            <person name="Polevoda B."/>
            <person name="Gazquez C."/>
            <person name="Elosegui-Artola A."/>
            <person name="Kim D.S."/>
            <person name="De Juan-Pardo E."/>
            <person name="Demeyer K."/>
            <person name="Hole K."/>
            <person name="Larrea E."/>
            <person name="Timmerman E."/>
            <person name="Prieto J."/>
            <person name="Arnesen T."/>
            <person name="Sherman F."/>
            <person name="Gevaert K."/>
            <person name="Aldabe R."/>
        </authorList>
    </citation>
    <scope>ACETYLATION [LARGE SCALE ANALYSIS] AT ALA-2</scope>
    <scope>CLEAVAGE OF INITIATOR METHIONINE [LARGE SCALE ANALYSIS]</scope>
    <scope>IDENTIFICATION BY MASS SPECTROMETRY [LARGE SCALE ANALYSIS]</scope>
</reference>
<reference key="18">
    <citation type="journal article" date="2013" name="J. Proteome Res.">
        <title>Toward a comprehensive characterization of a human cancer cell phosphoproteome.</title>
        <authorList>
            <person name="Zhou H."/>
            <person name="Di Palma S."/>
            <person name="Preisinger C."/>
            <person name="Peng M."/>
            <person name="Polat A.N."/>
            <person name="Heck A.J."/>
            <person name="Mohammed S."/>
        </authorList>
    </citation>
    <scope>PHOSPHORYLATION [LARGE SCALE ANALYSIS] AT SER-20; SER-73 AND THR-86</scope>
    <scope>IDENTIFICATION BY MASS SPECTROMETRY [LARGE SCALE ANALYSIS]</scope>
    <source>
        <tissue>Cervix carcinoma</tissue>
        <tissue>Erythroleukemia</tissue>
    </source>
</reference>
<reference key="19">
    <citation type="journal article" date="2014" name="J. Proteomics">
        <title>An enzyme assisted RP-RPLC approach for in-depth analysis of human liver phosphoproteome.</title>
        <authorList>
            <person name="Bian Y."/>
            <person name="Song C."/>
            <person name="Cheng K."/>
            <person name="Dong M."/>
            <person name="Wang F."/>
            <person name="Huang J."/>
            <person name="Sun D."/>
            <person name="Wang L."/>
            <person name="Ye M."/>
            <person name="Zou H."/>
        </authorList>
    </citation>
    <scope>PHOSPHORYLATION [LARGE SCALE ANALYSIS] AT SER-73</scope>
    <scope>IDENTIFICATION BY MASS SPECTROMETRY [LARGE SCALE ANALYSIS]</scope>
    <source>
        <tissue>Liver</tissue>
    </source>
</reference>
<reference key="20">
    <citation type="journal article" date="2023" name="Cell">
        <title>Human MCTS1-dependent translation of JAK2 is essential for IFN-gamma immunity to mycobacteria.</title>
        <authorList>
            <person name="Bohlen J."/>
            <person name="Zhou Q."/>
            <person name="Philippot Q."/>
            <person name="Ogishi M."/>
            <person name="Rinchai D."/>
            <person name="Nieminen T."/>
            <person name="Seyedpour S."/>
            <person name="Parvaneh N."/>
            <person name="Rezaei N."/>
            <person name="Yazdanpanah N."/>
            <person name="Momenilandi M."/>
            <person name="Conil C."/>
            <person name="Neehus A.L."/>
            <person name="Schmidt C."/>
            <person name="Arango-Franco C.A."/>
            <person name="Voyer T.L."/>
            <person name="Khan T."/>
            <person name="Yang R."/>
            <person name="Puchan J."/>
            <person name="Erazo L."/>
            <person name="Roiuk M."/>
            <person name="Vatovec T."/>
            <person name="Janda Z."/>
            <person name="Bagaric I."/>
            <person name="Materna M."/>
            <person name="Gervais A."/>
            <person name="Li H."/>
            <person name="Rosain J."/>
            <person name="Peel J.N."/>
            <person name="Seeleuthner Y."/>
            <person name="Han J.E."/>
            <person name="L'Honneur A.S."/>
            <person name="Moncada-Velez M."/>
            <person name="Martin-Fernandez M."/>
            <person name="Horesh M.E."/>
            <person name="Kochetkov T."/>
            <person name="Schmidt M."/>
            <person name="AlShehri M.A."/>
            <person name="Salo E."/>
            <person name="Saxen H."/>
            <person name="ElGhazali G."/>
            <person name="Yatim A."/>
            <person name="Soudee C."/>
            <person name="Sallusto F."/>
            <person name="Ensser A."/>
            <person name="Marr N."/>
            <person name="Zhang P."/>
            <person name="Bogunovic D."/>
            <person name="Cobat A."/>
            <person name="Shahrooei M."/>
            <person name="Beziat V."/>
            <person name="Abel L."/>
            <person name="Wang X."/>
            <person name="Boisson-Dupuis S."/>
            <person name="Teleman A.A."/>
            <person name="Bustamante J."/>
            <person name="Zhang Q."/>
            <person name="Casanova J.L."/>
        </authorList>
    </citation>
    <scope>INTERACTION WITH MCTS1</scope>
</reference>
<name>DENR_HUMAN</name>
<keyword id="KW-0002">3D-structure</keyword>
<keyword id="KW-0007">Acetylation</keyword>
<keyword id="KW-0963">Cytoplasm</keyword>
<keyword id="KW-0396">Initiation factor</keyword>
<keyword id="KW-0597">Phosphoprotein</keyword>
<keyword id="KW-0648">Protein biosynthesis</keyword>
<keyword id="KW-1267">Proteomics identification</keyword>
<keyword id="KW-1185">Reference proteome</keyword>
<proteinExistence type="evidence at protein level"/>
<feature type="initiator methionine" description="Removed" evidence="12 16 17">
    <location>
        <position position="1"/>
    </location>
</feature>
<feature type="chain" id="PRO_0000130600" description="Density-regulated protein">
    <location>
        <begin position="2"/>
        <end position="198"/>
    </location>
</feature>
<feature type="domain" description="SUI1" evidence="2">
    <location>
        <begin position="115"/>
        <end position="182"/>
    </location>
</feature>
<feature type="region of interest" description="Disordered" evidence="3">
    <location>
        <begin position="72"/>
        <end position="110"/>
    </location>
</feature>
<feature type="compositionally biased region" description="Basic residues" evidence="3">
    <location>
        <begin position="95"/>
        <end position="110"/>
    </location>
</feature>
<feature type="modified residue" description="N-acetylalanine" evidence="12 16 17">
    <location>
        <position position="2"/>
    </location>
</feature>
<feature type="modified residue" description="Phosphoserine" evidence="18">
    <location>
        <position position="20"/>
    </location>
</feature>
<feature type="modified residue" description="Phosphoserine" evidence="11 13 14 15 18 19">
    <location>
        <position position="73"/>
    </location>
</feature>
<feature type="modified residue" description="Phosphothreonine" evidence="18">
    <location>
        <position position="86"/>
    </location>
</feature>
<feature type="modified residue" description="Phosphoserine" evidence="1">
    <location>
        <position position="189"/>
    </location>
</feature>
<feature type="sequence conflict" description="In Ref. 5; AAF02420." evidence="10" ref="5">
    <original>DV</original>
    <variation>HE</variation>
    <location>
        <begin position="49"/>
        <end position="50"/>
    </location>
</feature>
<feature type="turn" evidence="21">
    <location>
        <begin position="35"/>
        <end position="37"/>
    </location>
</feature>
<feature type="helix" evidence="21">
    <location>
        <begin position="41"/>
        <end position="43"/>
    </location>
</feature>
<feature type="helix" evidence="20">
    <location>
        <begin position="44"/>
        <end position="46"/>
    </location>
</feature>
<feature type="helix" evidence="21">
    <location>
        <begin position="50"/>
        <end position="60"/>
    </location>
</feature>
<feature type="helix" evidence="21">
    <location>
        <begin position="62"/>
        <end position="69"/>
    </location>
</feature>
<feature type="strand" evidence="22">
    <location>
        <begin position="115"/>
        <end position="121"/>
    </location>
</feature>
<feature type="strand" evidence="22">
    <location>
        <begin position="125"/>
        <end position="132"/>
    </location>
</feature>
<feature type="helix" evidence="22">
    <location>
        <begin position="134"/>
        <end position="137"/>
    </location>
</feature>
<feature type="helix" evidence="22">
    <location>
        <begin position="141"/>
        <end position="152"/>
    </location>
</feature>
<feature type="strand" evidence="22">
    <location>
        <begin position="156"/>
        <end position="160"/>
    </location>
</feature>
<feature type="strand" evidence="22">
    <location>
        <begin position="163"/>
        <end position="168"/>
    </location>
</feature>
<feature type="turn" evidence="22">
    <location>
        <begin position="171"/>
        <end position="173"/>
    </location>
</feature>
<feature type="helix" evidence="22">
    <location>
        <begin position="174"/>
        <end position="181"/>
    </location>
</feature>
<feature type="helix" evidence="22">
    <location>
        <begin position="187"/>
        <end position="189"/>
    </location>
</feature>
<feature type="strand" evidence="22">
    <location>
        <begin position="190"/>
        <end position="192"/>
    </location>
</feature>